<sequence>MTDPFDPSAFLSTCSGRPGVYRMFDSDTRLLYVGKAKNLKSRLASYFRKTGLAPKTAALVGRIAQIETTITANETEALLLEQTLIKEWRPPYNILLRDDKSYPYVFLSDGEFPRFSIHRGAKKQKGKYFGPYPSAGAIRESLSLLQKTFMVRQCEDSYYKNRTRPCLQYQIKRCKAPCVGLVEAEVYAEDVRHSVMFLEGRSNALTDELSAGMEQAASTLDFEKAAELRDQISLLRRVQDQQSMEGGSGDVDVVAAFVNPGGACVHLISVRGGRVLGSKNFFPQVGIEEEVAEVMSAFLGQYFLSSPERDLPSELIVNVVHEDFPALIAAIQELRGRELSISHRVRGTRARWQQLAVTNAEQALSARLANRQHVAARFEALAEVLNLDEPPQRLECYDISHSSGEATVASCVVFGPEGPLKSDYRRYNIEGVTAGDDYAAMHQALTRRFSKLKDGEGKLPDILLVDGGKGQLSMARDVLNELAVPDLILLGVAKGATRKTGFETLYLNDAAHEFTLKGDSPALHLIQQIRDEAHRFAITGHRARRGKTRRTSTLEDVAGVGPKRRRDLLKHFGGLQELSRASIEEIAKAPGISKKLAELIYANLHSE</sequence>
<protein>
    <recommendedName>
        <fullName evidence="1">UvrABC system protein C</fullName>
        <shortName evidence="1">Protein UvrC</shortName>
    </recommendedName>
    <alternativeName>
        <fullName evidence="1">Excinuclease ABC subunit C</fullName>
    </alternativeName>
</protein>
<organism>
    <name type="scientific">Pseudomonas protegens (strain DSM 19095 / LMG 27888 / CFBP 6595 / CHA0)</name>
    <dbReference type="NCBI Taxonomy" id="1124983"/>
    <lineage>
        <taxon>Bacteria</taxon>
        <taxon>Pseudomonadati</taxon>
        <taxon>Pseudomonadota</taxon>
        <taxon>Gammaproteobacteria</taxon>
        <taxon>Pseudomonadales</taxon>
        <taxon>Pseudomonadaceae</taxon>
        <taxon>Pseudomonas</taxon>
    </lineage>
</organism>
<accession>P32966</accession>
<comment type="function">
    <text evidence="1">The UvrABC repair system catalyzes the recognition and processing of DNA lesions. UvrC both incises the 5' and 3' sides of the lesion. The N-terminal half is responsible for the 3' incision and the C-terminal half is responsible for the 5' incision.</text>
</comment>
<comment type="subunit">
    <text evidence="1">Interacts with UvrB in an incision complex.</text>
</comment>
<comment type="subcellular location">
    <subcellularLocation>
        <location evidence="1">Cytoplasm</location>
    </subcellularLocation>
</comment>
<comment type="similarity">
    <text evidence="1">Belongs to the UvrC family.</text>
</comment>
<proteinExistence type="inferred from homology"/>
<evidence type="ECO:0000255" key="1">
    <source>
        <dbReference type="HAMAP-Rule" id="MF_00203"/>
    </source>
</evidence>
<evidence type="ECO:0000305" key="2"/>
<dbReference type="EMBL" id="L29642">
    <property type="protein sequence ID" value="AAA98758.1"/>
    <property type="molecule type" value="Genomic_DNA"/>
</dbReference>
<dbReference type="EMBL" id="M80913">
    <property type="protein sequence ID" value="AAA25822.1"/>
    <property type="molecule type" value="Genomic_DNA"/>
</dbReference>
<dbReference type="SMR" id="P32966"/>
<dbReference type="eggNOG" id="COG0322">
    <property type="taxonomic scope" value="Bacteria"/>
</dbReference>
<dbReference type="GO" id="GO:0005737">
    <property type="term" value="C:cytoplasm"/>
    <property type="evidence" value="ECO:0007669"/>
    <property type="project" value="UniProtKB-SubCell"/>
</dbReference>
<dbReference type="GO" id="GO:0009380">
    <property type="term" value="C:excinuclease repair complex"/>
    <property type="evidence" value="ECO:0007669"/>
    <property type="project" value="InterPro"/>
</dbReference>
<dbReference type="GO" id="GO:0003677">
    <property type="term" value="F:DNA binding"/>
    <property type="evidence" value="ECO:0007669"/>
    <property type="project" value="UniProtKB-UniRule"/>
</dbReference>
<dbReference type="GO" id="GO:0009381">
    <property type="term" value="F:excinuclease ABC activity"/>
    <property type="evidence" value="ECO:0007669"/>
    <property type="project" value="UniProtKB-UniRule"/>
</dbReference>
<dbReference type="GO" id="GO:0006289">
    <property type="term" value="P:nucleotide-excision repair"/>
    <property type="evidence" value="ECO:0007669"/>
    <property type="project" value="UniProtKB-UniRule"/>
</dbReference>
<dbReference type="GO" id="GO:0009432">
    <property type="term" value="P:SOS response"/>
    <property type="evidence" value="ECO:0007669"/>
    <property type="project" value="UniProtKB-UniRule"/>
</dbReference>
<dbReference type="CDD" id="cd10434">
    <property type="entry name" value="GIY-YIG_UvrC_Cho"/>
    <property type="match status" value="1"/>
</dbReference>
<dbReference type="FunFam" id="1.10.150.20:FF:000005">
    <property type="entry name" value="UvrABC system protein C"/>
    <property type="match status" value="1"/>
</dbReference>
<dbReference type="FunFam" id="3.30.420.340:FF:000001">
    <property type="entry name" value="UvrABC system protein C"/>
    <property type="match status" value="1"/>
</dbReference>
<dbReference type="FunFam" id="3.40.1440.10:FF:000001">
    <property type="entry name" value="UvrABC system protein C"/>
    <property type="match status" value="1"/>
</dbReference>
<dbReference type="Gene3D" id="1.10.150.20">
    <property type="entry name" value="5' to 3' exonuclease, C-terminal subdomain"/>
    <property type="match status" value="1"/>
</dbReference>
<dbReference type="Gene3D" id="3.40.1440.10">
    <property type="entry name" value="GIY-YIG endonuclease"/>
    <property type="match status" value="1"/>
</dbReference>
<dbReference type="Gene3D" id="4.10.860.10">
    <property type="entry name" value="UVR domain"/>
    <property type="match status" value="1"/>
</dbReference>
<dbReference type="Gene3D" id="3.30.420.340">
    <property type="entry name" value="UvrC, RNAse H endonuclease domain"/>
    <property type="match status" value="1"/>
</dbReference>
<dbReference type="HAMAP" id="MF_00203">
    <property type="entry name" value="UvrC"/>
    <property type="match status" value="1"/>
</dbReference>
<dbReference type="InterPro" id="IPR000305">
    <property type="entry name" value="GIY-YIG_endonuc"/>
</dbReference>
<dbReference type="InterPro" id="IPR035901">
    <property type="entry name" value="GIY-YIG_endonuc_sf"/>
</dbReference>
<dbReference type="InterPro" id="IPR047296">
    <property type="entry name" value="GIY-YIG_UvrC_Cho"/>
</dbReference>
<dbReference type="InterPro" id="IPR003583">
    <property type="entry name" value="Hlx-hairpin-Hlx_DNA-bd_motif"/>
</dbReference>
<dbReference type="InterPro" id="IPR010994">
    <property type="entry name" value="RuvA_2-like"/>
</dbReference>
<dbReference type="InterPro" id="IPR001943">
    <property type="entry name" value="UVR_dom"/>
</dbReference>
<dbReference type="InterPro" id="IPR036876">
    <property type="entry name" value="UVR_dom_sf"/>
</dbReference>
<dbReference type="InterPro" id="IPR050066">
    <property type="entry name" value="UvrABC_protein_C"/>
</dbReference>
<dbReference type="InterPro" id="IPR004791">
    <property type="entry name" value="UvrC"/>
</dbReference>
<dbReference type="InterPro" id="IPR001162">
    <property type="entry name" value="UvrC_RNase_H_dom"/>
</dbReference>
<dbReference type="InterPro" id="IPR038476">
    <property type="entry name" value="UvrC_RNase_H_dom_sf"/>
</dbReference>
<dbReference type="NCBIfam" id="NF001824">
    <property type="entry name" value="PRK00558.1-5"/>
    <property type="match status" value="1"/>
</dbReference>
<dbReference type="NCBIfam" id="TIGR00194">
    <property type="entry name" value="uvrC"/>
    <property type="match status" value="1"/>
</dbReference>
<dbReference type="PANTHER" id="PTHR30562:SF1">
    <property type="entry name" value="UVRABC SYSTEM PROTEIN C"/>
    <property type="match status" value="1"/>
</dbReference>
<dbReference type="PANTHER" id="PTHR30562">
    <property type="entry name" value="UVRC/OXIDOREDUCTASE"/>
    <property type="match status" value="1"/>
</dbReference>
<dbReference type="Pfam" id="PF01541">
    <property type="entry name" value="GIY-YIG"/>
    <property type="match status" value="1"/>
</dbReference>
<dbReference type="Pfam" id="PF14520">
    <property type="entry name" value="HHH_5"/>
    <property type="match status" value="1"/>
</dbReference>
<dbReference type="Pfam" id="PF02151">
    <property type="entry name" value="UVR"/>
    <property type="match status" value="1"/>
</dbReference>
<dbReference type="Pfam" id="PF22920">
    <property type="entry name" value="UvrC_RNaseH"/>
    <property type="match status" value="1"/>
</dbReference>
<dbReference type="Pfam" id="PF08459">
    <property type="entry name" value="UvrC_RNaseH_dom"/>
    <property type="match status" value="1"/>
</dbReference>
<dbReference type="SMART" id="SM00465">
    <property type="entry name" value="GIYc"/>
    <property type="match status" value="1"/>
</dbReference>
<dbReference type="SMART" id="SM00278">
    <property type="entry name" value="HhH1"/>
    <property type="match status" value="2"/>
</dbReference>
<dbReference type="SUPFAM" id="SSF46600">
    <property type="entry name" value="C-terminal UvrC-binding domain of UvrB"/>
    <property type="match status" value="1"/>
</dbReference>
<dbReference type="SUPFAM" id="SSF82771">
    <property type="entry name" value="GIY-YIG endonuclease"/>
    <property type="match status" value="1"/>
</dbReference>
<dbReference type="SUPFAM" id="SSF47781">
    <property type="entry name" value="RuvA domain 2-like"/>
    <property type="match status" value="1"/>
</dbReference>
<dbReference type="PROSITE" id="PS50164">
    <property type="entry name" value="GIY_YIG"/>
    <property type="match status" value="1"/>
</dbReference>
<dbReference type="PROSITE" id="PS50151">
    <property type="entry name" value="UVR"/>
    <property type="match status" value="1"/>
</dbReference>
<dbReference type="PROSITE" id="PS50165">
    <property type="entry name" value="UVRC"/>
    <property type="match status" value="1"/>
</dbReference>
<gene>
    <name evidence="1" type="primary">uvrC</name>
</gene>
<reference key="1">
    <citation type="journal article" date="1994" name="Mol. Plant Microbe Interact.">
        <title>Global regulation of expression of antifungal factors by a Pseudomonas fluorescens biological control strain.</title>
        <authorList>
            <person name="Gaffney T.D."/>
            <person name="Lam S.T."/>
            <person name="Ligon J."/>
            <person name="Gates K."/>
            <person name="Frazelle A."/>
            <person name="Maio J."/>
            <person name="Hill S."/>
            <person name="Goodwin S."/>
            <person name="Torkewitz N."/>
            <person name="Allshouse A.M."/>
            <person name="Kempf H.J."/>
            <person name="Becker J.O."/>
        </authorList>
    </citation>
    <scope>NUCLEOTIDE SEQUENCE [GENOMIC DNA]</scope>
    <source>
        <strain>BL915</strain>
    </source>
</reference>
<reference key="2">
    <citation type="journal article" date="1992" name="Proc. Natl. Acad. Sci. U.S.A.">
        <title>Global control in Pseudomonas fluorescens mediating antibiotic synthesis and suppression of black root rot of tobacco.</title>
        <authorList>
            <person name="Laville J."/>
            <person name="Voisard C.P."/>
            <person name="Keel C."/>
            <person name="Maurhofer M."/>
            <person name="Difago G."/>
            <person name="Haas D."/>
        </authorList>
    </citation>
    <scope>NUCLEOTIDE SEQUENCE [GENOMIC DNA] OF 1-232</scope>
    <source>
        <strain>DSM 19095 / LMG 27888 / CFBP 6595 / CHA0</strain>
    </source>
</reference>
<name>UVRC_PSEPH</name>
<keyword id="KW-0963">Cytoplasm</keyword>
<keyword id="KW-0227">DNA damage</keyword>
<keyword id="KW-0228">DNA excision</keyword>
<keyword id="KW-0234">DNA repair</keyword>
<keyword id="KW-0267">Excision nuclease</keyword>
<keyword id="KW-0742">SOS response</keyword>
<feature type="chain" id="PRO_0000138327" description="UvrABC system protein C">
    <location>
        <begin position="1"/>
        <end position="607"/>
    </location>
</feature>
<feature type="domain" description="GIY-YIG" evidence="1">
    <location>
        <begin position="16"/>
        <end position="94"/>
    </location>
</feature>
<feature type="domain" description="UVR" evidence="1">
    <location>
        <begin position="203"/>
        <end position="238"/>
    </location>
</feature>
<feature type="sequence conflict" description="In Ref. 2; AAA25822." evidence="2" ref="2">
    <original>DP</original>
    <variation>EQ</variation>
    <location>
        <begin position="3"/>
        <end position="4"/>
    </location>
</feature>
<feature type="sequence conflict" description="In Ref. 2; AAA25822." evidence="2" ref="2">
    <original>T</original>
    <variation>A</variation>
    <location>
        <position position="28"/>
    </location>
</feature>
<feature type="sequence conflict" description="In Ref. 2; AAA25822." evidence="2" ref="2">
    <original>S</original>
    <variation>N</variation>
    <location>
        <position position="41"/>
    </location>
</feature>
<feature type="sequence conflict" description="In Ref. 2; AAA25822." evidence="2" ref="2">
    <original>A</original>
    <variation>S</variation>
    <location>
        <position position="44"/>
    </location>
</feature>
<feature type="sequence conflict" description="In Ref. 2; AAA25822." evidence="2" ref="2">
    <original>L</original>
    <variation>Q</variation>
    <location>
        <position position="52"/>
    </location>
</feature>
<feature type="sequence conflict" description="In Ref. 2; AAA25822." evidence="2" ref="2">
    <original>G</original>
    <variation>A</variation>
    <location>
        <position position="61"/>
    </location>
</feature>
<feature type="sequence conflict" description="In Ref. 2; AAA25822." evidence="2" ref="2">
    <original>E</original>
    <variation>D</variation>
    <location>
        <position position="111"/>
    </location>
</feature>
<feature type="sequence conflict" description="In Ref. 2; AAA25822." evidence="2" ref="2">
    <original>K</original>
    <variation>R</variation>
    <location>
        <position position="123"/>
    </location>
</feature>
<feature type="sequence conflict" description="In Ref. 2; AAA25822." evidence="2" ref="2">
    <original>A</original>
    <variation>P</variation>
    <location>
        <position position="184"/>
    </location>
</feature>
<feature type="sequence conflict" description="In Ref. 2; AAA25822." evidence="2" ref="2">
    <original>AG</original>
    <variation>TA</variation>
    <location>
        <begin position="211"/>
        <end position="212"/>
    </location>
</feature>
<feature type="sequence conflict" description="In Ref. 2; AAA25822." evidence="2" ref="2">
    <original>Q</original>
    <variation>A</variation>
    <location>
        <position position="215"/>
    </location>
</feature>